<feature type="chain" id="PRO_0000121933" description="tRNA pseudouridine synthase B">
    <location>
        <begin position="1"/>
        <end position="357"/>
    </location>
</feature>
<feature type="active site" description="Nucleophile" evidence="1">
    <location>
        <position position="42"/>
    </location>
</feature>
<name>TRUB_TREDE</name>
<accession>Q73NP8</accession>
<evidence type="ECO:0000255" key="1">
    <source>
        <dbReference type="HAMAP-Rule" id="MF_01080"/>
    </source>
</evidence>
<organism>
    <name type="scientific">Treponema denticola (strain ATCC 35405 / DSM 14222 / CIP 103919 / JCM 8153 / KCTC 15104)</name>
    <dbReference type="NCBI Taxonomy" id="243275"/>
    <lineage>
        <taxon>Bacteria</taxon>
        <taxon>Pseudomonadati</taxon>
        <taxon>Spirochaetota</taxon>
        <taxon>Spirochaetia</taxon>
        <taxon>Spirochaetales</taxon>
        <taxon>Treponemataceae</taxon>
        <taxon>Treponema</taxon>
    </lineage>
</organism>
<gene>
    <name evidence="1" type="primary">truB</name>
    <name type="ordered locus">TDE_1104</name>
</gene>
<proteinExistence type="inferred from homology"/>
<reference key="1">
    <citation type="journal article" date="2004" name="Proc. Natl. Acad. Sci. U.S.A.">
        <title>Comparison of the genome of the oral pathogen Treponema denticola with other spirochete genomes.</title>
        <authorList>
            <person name="Seshadri R."/>
            <person name="Myers G.S.A."/>
            <person name="Tettelin H."/>
            <person name="Eisen J.A."/>
            <person name="Heidelberg J.F."/>
            <person name="Dodson R.J."/>
            <person name="Davidsen T.M."/>
            <person name="DeBoy R.T."/>
            <person name="Fouts D.E."/>
            <person name="Haft D.H."/>
            <person name="Selengut J."/>
            <person name="Ren Q."/>
            <person name="Brinkac L.M."/>
            <person name="Madupu R."/>
            <person name="Kolonay J.F."/>
            <person name="Durkin S.A."/>
            <person name="Daugherty S.C."/>
            <person name="Shetty J."/>
            <person name="Shvartsbeyn A."/>
            <person name="Gebregeorgis E."/>
            <person name="Geer K."/>
            <person name="Tsegaye G."/>
            <person name="Malek J.A."/>
            <person name="Ayodeji B."/>
            <person name="Shatsman S."/>
            <person name="McLeod M.P."/>
            <person name="Smajs D."/>
            <person name="Howell J.K."/>
            <person name="Pal S."/>
            <person name="Amin A."/>
            <person name="Vashisth P."/>
            <person name="McNeill T.Z."/>
            <person name="Xiang Q."/>
            <person name="Sodergren E."/>
            <person name="Baca E."/>
            <person name="Weinstock G.M."/>
            <person name="Norris S.J."/>
            <person name="Fraser C.M."/>
            <person name="Paulsen I.T."/>
        </authorList>
    </citation>
    <scope>NUCLEOTIDE SEQUENCE [LARGE SCALE GENOMIC DNA]</scope>
    <source>
        <strain>ATCC 35405 / DSM 14222 / CIP 103919 / JCM 8153 / KCTC 15104</strain>
    </source>
</reference>
<dbReference type="EC" id="5.4.99.25" evidence="1"/>
<dbReference type="EMBL" id="AE017226">
    <property type="protein sequence ID" value="AAS11593.1"/>
    <property type="molecule type" value="Genomic_DNA"/>
</dbReference>
<dbReference type="RefSeq" id="NP_971712.1">
    <property type="nucleotide sequence ID" value="NC_002967.9"/>
</dbReference>
<dbReference type="RefSeq" id="WP_002682411.1">
    <property type="nucleotide sequence ID" value="NC_002967.9"/>
</dbReference>
<dbReference type="SMR" id="Q73NP8"/>
<dbReference type="STRING" id="243275.TDE_1104"/>
<dbReference type="PaxDb" id="243275-TDE_1104"/>
<dbReference type="GeneID" id="2740234"/>
<dbReference type="KEGG" id="tde:TDE_1104"/>
<dbReference type="PATRIC" id="fig|243275.7.peg.1063"/>
<dbReference type="eggNOG" id="COG0130">
    <property type="taxonomic scope" value="Bacteria"/>
</dbReference>
<dbReference type="HOGENOM" id="CLU_032087_0_0_12"/>
<dbReference type="OrthoDB" id="9802309at2"/>
<dbReference type="Proteomes" id="UP000008212">
    <property type="component" value="Chromosome"/>
</dbReference>
<dbReference type="GO" id="GO:0003723">
    <property type="term" value="F:RNA binding"/>
    <property type="evidence" value="ECO:0007669"/>
    <property type="project" value="InterPro"/>
</dbReference>
<dbReference type="GO" id="GO:0160148">
    <property type="term" value="F:tRNA pseudouridine(55) synthase activity"/>
    <property type="evidence" value="ECO:0007669"/>
    <property type="project" value="UniProtKB-EC"/>
</dbReference>
<dbReference type="GO" id="GO:1990481">
    <property type="term" value="P:mRNA pseudouridine synthesis"/>
    <property type="evidence" value="ECO:0007669"/>
    <property type="project" value="TreeGrafter"/>
</dbReference>
<dbReference type="GO" id="GO:0031119">
    <property type="term" value="P:tRNA pseudouridine synthesis"/>
    <property type="evidence" value="ECO:0007669"/>
    <property type="project" value="UniProtKB-UniRule"/>
</dbReference>
<dbReference type="CDD" id="cd02573">
    <property type="entry name" value="PseudoU_synth_EcTruB"/>
    <property type="match status" value="1"/>
</dbReference>
<dbReference type="Gene3D" id="3.30.2350.10">
    <property type="entry name" value="Pseudouridine synthase"/>
    <property type="match status" value="1"/>
</dbReference>
<dbReference type="HAMAP" id="MF_01080">
    <property type="entry name" value="TruB_bact"/>
    <property type="match status" value="1"/>
</dbReference>
<dbReference type="InterPro" id="IPR020103">
    <property type="entry name" value="PsdUridine_synth_cat_dom_sf"/>
</dbReference>
<dbReference type="InterPro" id="IPR002501">
    <property type="entry name" value="PsdUridine_synth_N"/>
</dbReference>
<dbReference type="InterPro" id="IPR014780">
    <property type="entry name" value="tRNA_psdUridine_synth_TruB"/>
</dbReference>
<dbReference type="NCBIfam" id="TIGR00431">
    <property type="entry name" value="TruB"/>
    <property type="match status" value="1"/>
</dbReference>
<dbReference type="PANTHER" id="PTHR13767:SF2">
    <property type="entry name" value="PSEUDOURIDYLATE SYNTHASE TRUB1"/>
    <property type="match status" value="1"/>
</dbReference>
<dbReference type="PANTHER" id="PTHR13767">
    <property type="entry name" value="TRNA-PSEUDOURIDINE SYNTHASE"/>
    <property type="match status" value="1"/>
</dbReference>
<dbReference type="Pfam" id="PF01509">
    <property type="entry name" value="TruB_N"/>
    <property type="match status" value="1"/>
</dbReference>
<dbReference type="SUPFAM" id="SSF55120">
    <property type="entry name" value="Pseudouridine synthase"/>
    <property type="match status" value="1"/>
</dbReference>
<comment type="function">
    <text evidence="1">Responsible for synthesis of pseudouridine from uracil-55 in the psi GC loop of transfer RNAs.</text>
</comment>
<comment type="catalytic activity">
    <reaction evidence="1">
        <text>uridine(55) in tRNA = pseudouridine(55) in tRNA</text>
        <dbReference type="Rhea" id="RHEA:42532"/>
        <dbReference type="Rhea" id="RHEA-COMP:10101"/>
        <dbReference type="Rhea" id="RHEA-COMP:10102"/>
        <dbReference type="ChEBI" id="CHEBI:65314"/>
        <dbReference type="ChEBI" id="CHEBI:65315"/>
        <dbReference type="EC" id="5.4.99.25"/>
    </reaction>
</comment>
<comment type="similarity">
    <text evidence="1">Belongs to the pseudouridine synthase TruB family. Type 1 subfamily.</text>
</comment>
<keyword id="KW-0413">Isomerase</keyword>
<keyword id="KW-1185">Reference proteome</keyword>
<keyword id="KW-0819">tRNA processing</keyword>
<sequence length="357" mass="40131">MELNKNLIIPFAKQAGLTSFASMSAVKKALSTKKVGHTGTLDLFADGLLVLLTGQLTRLADIISAEKKTYEAWVEFGTETDTLDPEGEPVLTAPLPSYKNLTESIPSFLGKILQRPPEFSAIKINGKRASDRIRSGEKIKIAEREIEIFKIELKGIITDSGLEFTEKDFTNINAELKIRYAHIVVECSKGTYIRSLVRDLARKASSCAYVRALRRTAVGNFKLEDAAGFDLLNNFSAAPENLFLKEKKILDAAAGKKFYKQKEIDFLEIMAKSIIFSPKTAENLKLPYLFLDRKYLNDFYNGKKIKFNWFLNTDEVLENITGLDLENKKTCVFCGDLWIGIIGLNKNCPKYETVIKN</sequence>
<protein>
    <recommendedName>
        <fullName evidence="1">tRNA pseudouridine synthase B</fullName>
        <ecNumber evidence="1">5.4.99.25</ecNumber>
    </recommendedName>
    <alternativeName>
        <fullName evidence="1">tRNA pseudouridine(55) synthase</fullName>
        <shortName evidence="1">Psi55 synthase</shortName>
    </alternativeName>
    <alternativeName>
        <fullName evidence="1">tRNA pseudouridylate synthase</fullName>
    </alternativeName>
    <alternativeName>
        <fullName evidence="1">tRNA-uridine isomerase</fullName>
    </alternativeName>
</protein>